<name>HIS4_CHLAD</name>
<gene>
    <name evidence="1" type="primary">hisA</name>
    <name type="ordered locus">Cagg_3587</name>
</gene>
<feature type="chain" id="PRO_1000148960" description="1-(5-phosphoribosyl)-5-[(5-phosphoribosylamino)methylideneamino] imidazole-4-carboxamide isomerase">
    <location>
        <begin position="1"/>
        <end position="241"/>
    </location>
</feature>
<feature type="active site" description="Proton acceptor" evidence="1">
    <location>
        <position position="8"/>
    </location>
</feature>
<feature type="active site" description="Proton donor" evidence="1">
    <location>
        <position position="129"/>
    </location>
</feature>
<proteinExistence type="inferred from homology"/>
<reference key="1">
    <citation type="submission" date="2008-12" db="EMBL/GenBank/DDBJ databases">
        <title>Complete sequence of Chloroflexus aggregans DSM 9485.</title>
        <authorList>
            <consortium name="US DOE Joint Genome Institute"/>
            <person name="Lucas S."/>
            <person name="Copeland A."/>
            <person name="Lapidus A."/>
            <person name="Glavina del Rio T."/>
            <person name="Dalin E."/>
            <person name="Tice H."/>
            <person name="Pitluck S."/>
            <person name="Foster B."/>
            <person name="Larimer F."/>
            <person name="Land M."/>
            <person name="Hauser L."/>
            <person name="Kyrpides N."/>
            <person name="Mikhailova N."/>
            <person name="Bryant D.A."/>
            <person name="Richardson P."/>
        </authorList>
    </citation>
    <scope>NUCLEOTIDE SEQUENCE [LARGE SCALE GENOMIC DNA]</scope>
    <source>
        <strain>MD-66 / DSM 9485</strain>
    </source>
</reference>
<protein>
    <recommendedName>
        <fullName evidence="1">1-(5-phosphoribosyl)-5-[(5-phosphoribosylamino)methylideneamino] imidazole-4-carboxamide isomerase</fullName>
        <ecNumber evidence="1">5.3.1.16</ecNumber>
    </recommendedName>
    <alternativeName>
        <fullName evidence="1">Phosphoribosylformimino-5-aminoimidazole carboxamide ribotide isomerase</fullName>
    </alternativeName>
</protein>
<dbReference type="EC" id="5.3.1.16" evidence="1"/>
<dbReference type="EMBL" id="CP001337">
    <property type="protein sequence ID" value="ACL26425.1"/>
    <property type="molecule type" value="Genomic_DNA"/>
</dbReference>
<dbReference type="RefSeq" id="WP_015942271.1">
    <property type="nucleotide sequence ID" value="NC_011831.1"/>
</dbReference>
<dbReference type="SMR" id="B8G9S2"/>
<dbReference type="STRING" id="326427.Cagg_3587"/>
<dbReference type="KEGG" id="cag:Cagg_3587"/>
<dbReference type="eggNOG" id="COG0106">
    <property type="taxonomic scope" value="Bacteria"/>
</dbReference>
<dbReference type="HOGENOM" id="CLU_048577_1_1_0"/>
<dbReference type="OrthoDB" id="9781903at2"/>
<dbReference type="UniPathway" id="UPA00031">
    <property type="reaction ID" value="UER00009"/>
</dbReference>
<dbReference type="Proteomes" id="UP000002508">
    <property type="component" value="Chromosome"/>
</dbReference>
<dbReference type="GO" id="GO:0005737">
    <property type="term" value="C:cytoplasm"/>
    <property type="evidence" value="ECO:0007669"/>
    <property type="project" value="UniProtKB-SubCell"/>
</dbReference>
<dbReference type="GO" id="GO:0003949">
    <property type="term" value="F:1-(5-phosphoribosyl)-5-[(5-phosphoribosylamino)methylideneamino]imidazole-4-carboxamide isomerase activity"/>
    <property type="evidence" value="ECO:0007669"/>
    <property type="project" value="UniProtKB-UniRule"/>
</dbReference>
<dbReference type="GO" id="GO:0000105">
    <property type="term" value="P:L-histidine biosynthetic process"/>
    <property type="evidence" value="ECO:0007669"/>
    <property type="project" value="UniProtKB-UniRule"/>
</dbReference>
<dbReference type="GO" id="GO:0000162">
    <property type="term" value="P:L-tryptophan biosynthetic process"/>
    <property type="evidence" value="ECO:0007669"/>
    <property type="project" value="TreeGrafter"/>
</dbReference>
<dbReference type="CDD" id="cd04732">
    <property type="entry name" value="HisA"/>
    <property type="match status" value="1"/>
</dbReference>
<dbReference type="FunFam" id="3.20.20.70:FF:000009">
    <property type="entry name" value="1-(5-phosphoribosyl)-5-[(5-phosphoribosylamino)methylideneamino] imidazole-4-carboxamide isomerase"/>
    <property type="match status" value="1"/>
</dbReference>
<dbReference type="Gene3D" id="3.20.20.70">
    <property type="entry name" value="Aldolase class I"/>
    <property type="match status" value="1"/>
</dbReference>
<dbReference type="HAMAP" id="MF_01014">
    <property type="entry name" value="HisA"/>
    <property type="match status" value="1"/>
</dbReference>
<dbReference type="InterPro" id="IPR013785">
    <property type="entry name" value="Aldolase_TIM"/>
</dbReference>
<dbReference type="InterPro" id="IPR006062">
    <property type="entry name" value="His_biosynth"/>
</dbReference>
<dbReference type="InterPro" id="IPR006063">
    <property type="entry name" value="HisA_bact_arch"/>
</dbReference>
<dbReference type="InterPro" id="IPR044524">
    <property type="entry name" value="Isoase_HisA-like"/>
</dbReference>
<dbReference type="InterPro" id="IPR023016">
    <property type="entry name" value="Isoase_HisA-like_bact"/>
</dbReference>
<dbReference type="InterPro" id="IPR011060">
    <property type="entry name" value="RibuloseP-bd_barrel"/>
</dbReference>
<dbReference type="NCBIfam" id="TIGR00007">
    <property type="entry name" value="1-(5-phosphoribosyl)-5-[(5-phosphoribosylamino)methylideneamino]imidazole-4-carboxamide isomerase"/>
    <property type="match status" value="1"/>
</dbReference>
<dbReference type="PANTHER" id="PTHR43090">
    <property type="entry name" value="1-(5-PHOSPHORIBOSYL)-5-[(5-PHOSPHORIBOSYLAMINO)METHYLIDENEAMINO] IMIDAZOLE-4-CARBOXAMIDE ISOMERASE"/>
    <property type="match status" value="1"/>
</dbReference>
<dbReference type="PANTHER" id="PTHR43090:SF2">
    <property type="entry name" value="1-(5-PHOSPHORIBOSYL)-5-[(5-PHOSPHORIBOSYLAMINO)METHYLIDENEAMINO] IMIDAZOLE-4-CARBOXAMIDE ISOMERASE"/>
    <property type="match status" value="1"/>
</dbReference>
<dbReference type="Pfam" id="PF00977">
    <property type="entry name" value="His_biosynth"/>
    <property type="match status" value="1"/>
</dbReference>
<dbReference type="SUPFAM" id="SSF51366">
    <property type="entry name" value="Ribulose-phoshate binding barrel"/>
    <property type="match status" value="1"/>
</dbReference>
<sequence>MEIIPAIDIKDGRCVRLYQGDFAQMTVYADDPVAVARRWQAQGATRIHVVDLDGARTGRPQNVDAVLAITQTVQIPVQLGGGLRREEDVAAALALGVERVIIGTAAIVETELVARLLERFGERIIIGIDARNGMVATDGWTVTSTIAATDLAGQMAALGARRFIYTDISRDGALSGPNFTALAELVKPDGPAIIASGGIANLDHIRQLAQIGVEGVIIGKALYTGAIYLPEAIAIAQTATG</sequence>
<accession>B8G9S2</accession>
<organism>
    <name type="scientific">Chloroflexus aggregans (strain MD-66 / DSM 9485)</name>
    <dbReference type="NCBI Taxonomy" id="326427"/>
    <lineage>
        <taxon>Bacteria</taxon>
        <taxon>Bacillati</taxon>
        <taxon>Chloroflexota</taxon>
        <taxon>Chloroflexia</taxon>
        <taxon>Chloroflexales</taxon>
        <taxon>Chloroflexineae</taxon>
        <taxon>Chloroflexaceae</taxon>
        <taxon>Chloroflexus</taxon>
    </lineage>
</organism>
<keyword id="KW-0028">Amino-acid biosynthesis</keyword>
<keyword id="KW-0963">Cytoplasm</keyword>
<keyword id="KW-0368">Histidine biosynthesis</keyword>
<keyword id="KW-0413">Isomerase</keyword>
<evidence type="ECO:0000255" key="1">
    <source>
        <dbReference type="HAMAP-Rule" id="MF_01014"/>
    </source>
</evidence>
<comment type="catalytic activity">
    <reaction evidence="1">
        <text>1-(5-phospho-beta-D-ribosyl)-5-[(5-phospho-beta-D-ribosylamino)methylideneamino]imidazole-4-carboxamide = 5-[(5-phospho-1-deoxy-D-ribulos-1-ylimino)methylamino]-1-(5-phospho-beta-D-ribosyl)imidazole-4-carboxamide</text>
        <dbReference type="Rhea" id="RHEA:15469"/>
        <dbReference type="ChEBI" id="CHEBI:58435"/>
        <dbReference type="ChEBI" id="CHEBI:58525"/>
        <dbReference type="EC" id="5.3.1.16"/>
    </reaction>
</comment>
<comment type="pathway">
    <text evidence="1">Amino-acid biosynthesis; L-histidine biosynthesis; L-histidine from 5-phospho-alpha-D-ribose 1-diphosphate: step 4/9.</text>
</comment>
<comment type="subcellular location">
    <subcellularLocation>
        <location evidence="1">Cytoplasm</location>
    </subcellularLocation>
</comment>
<comment type="similarity">
    <text evidence="1">Belongs to the HisA/HisF family.</text>
</comment>